<comment type="function">
    <text evidence="1">Catalyzes the folate-dependent formation of 5-methyl-uridine at position 54 (M-5-U54) in all tRNAs.</text>
</comment>
<comment type="catalytic activity">
    <reaction evidence="1">
        <text>uridine(54) in tRNA + (6R)-5,10-methylene-5,6,7,8-tetrahydrofolate + NADH + H(+) = 5-methyluridine(54) in tRNA + (6S)-5,6,7,8-tetrahydrofolate + NAD(+)</text>
        <dbReference type="Rhea" id="RHEA:16873"/>
        <dbReference type="Rhea" id="RHEA-COMP:10167"/>
        <dbReference type="Rhea" id="RHEA-COMP:10193"/>
        <dbReference type="ChEBI" id="CHEBI:15378"/>
        <dbReference type="ChEBI" id="CHEBI:15636"/>
        <dbReference type="ChEBI" id="CHEBI:57453"/>
        <dbReference type="ChEBI" id="CHEBI:57540"/>
        <dbReference type="ChEBI" id="CHEBI:57945"/>
        <dbReference type="ChEBI" id="CHEBI:65315"/>
        <dbReference type="ChEBI" id="CHEBI:74447"/>
        <dbReference type="EC" id="2.1.1.74"/>
    </reaction>
</comment>
<comment type="catalytic activity">
    <reaction evidence="1">
        <text>uridine(54) in tRNA + (6R)-5,10-methylene-5,6,7,8-tetrahydrofolate + NADPH + H(+) = 5-methyluridine(54) in tRNA + (6S)-5,6,7,8-tetrahydrofolate + NADP(+)</text>
        <dbReference type="Rhea" id="RHEA:62372"/>
        <dbReference type="Rhea" id="RHEA-COMP:10167"/>
        <dbReference type="Rhea" id="RHEA-COMP:10193"/>
        <dbReference type="ChEBI" id="CHEBI:15378"/>
        <dbReference type="ChEBI" id="CHEBI:15636"/>
        <dbReference type="ChEBI" id="CHEBI:57453"/>
        <dbReference type="ChEBI" id="CHEBI:57783"/>
        <dbReference type="ChEBI" id="CHEBI:58349"/>
        <dbReference type="ChEBI" id="CHEBI:65315"/>
        <dbReference type="ChEBI" id="CHEBI:74447"/>
        <dbReference type="EC" id="2.1.1.74"/>
    </reaction>
</comment>
<comment type="cofactor">
    <cofactor evidence="1">
        <name>FAD</name>
        <dbReference type="ChEBI" id="CHEBI:57692"/>
    </cofactor>
</comment>
<comment type="subcellular location">
    <subcellularLocation>
        <location evidence="1">Cytoplasm</location>
    </subcellularLocation>
</comment>
<comment type="similarity">
    <text evidence="1">Belongs to the MnmG family. TrmFO subfamily.</text>
</comment>
<gene>
    <name evidence="1" type="primary">trmFO</name>
    <name type="ordered locus">Bsph_1542</name>
</gene>
<feature type="chain" id="PRO_0000346350" description="Methylenetetrahydrofolate--tRNA-(uracil-5-)-methyltransferase TrmFO">
    <location>
        <begin position="1"/>
        <end position="437"/>
    </location>
</feature>
<feature type="binding site" evidence="1">
    <location>
        <begin position="10"/>
        <end position="15"/>
    </location>
    <ligand>
        <name>FAD</name>
        <dbReference type="ChEBI" id="CHEBI:57692"/>
    </ligand>
</feature>
<organism>
    <name type="scientific">Lysinibacillus sphaericus (strain C3-41)</name>
    <dbReference type="NCBI Taxonomy" id="444177"/>
    <lineage>
        <taxon>Bacteria</taxon>
        <taxon>Bacillati</taxon>
        <taxon>Bacillota</taxon>
        <taxon>Bacilli</taxon>
        <taxon>Bacillales</taxon>
        <taxon>Bacillaceae</taxon>
        <taxon>Lysinibacillus</taxon>
    </lineage>
</organism>
<protein>
    <recommendedName>
        <fullName evidence="1">Methylenetetrahydrofolate--tRNA-(uracil-5-)-methyltransferase TrmFO</fullName>
        <ecNumber evidence="1">2.1.1.74</ecNumber>
    </recommendedName>
    <alternativeName>
        <fullName evidence="1">Folate-dependent tRNA (uracil-5-)-methyltransferase</fullName>
    </alternativeName>
    <alternativeName>
        <fullName evidence="1">Folate-dependent tRNA(M-5-U54)-methyltransferase</fullName>
    </alternativeName>
</protein>
<keyword id="KW-0963">Cytoplasm</keyword>
<keyword id="KW-0274">FAD</keyword>
<keyword id="KW-0285">Flavoprotein</keyword>
<keyword id="KW-0489">Methyltransferase</keyword>
<keyword id="KW-0520">NAD</keyword>
<keyword id="KW-0521">NADP</keyword>
<keyword id="KW-0808">Transferase</keyword>
<keyword id="KW-0819">tRNA processing</keyword>
<dbReference type="EC" id="2.1.1.74" evidence="1"/>
<dbReference type="EMBL" id="CP000817">
    <property type="protein sequence ID" value="ACA39140.1"/>
    <property type="molecule type" value="Genomic_DNA"/>
</dbReference>
<dbReference type="RefSeq" id="WP_012293254.1">
    <property type="nucleotide sequence ID" value="NC_010382.1"/>
</dbReference>
<dbReference type="SMR" id="B1HQJ3"/>
<dbReference type="EnsemblBacteria" id="ACA39140">
    <property type="protein sequence ID" value="ACA39140"/>
    <property type="gene ID" value="Bsph_1542"/>
</dbReference>
<dbReference type="KEGG" id="lsp:Bsph_1542"/>
<dbReference type="HOGENOM" id="CLU_033057_1_0_9"/>
<dbReference type="Proteomes" id="UP000002164">
    <property type="component" value="Chromosome"/>
</dbReference>
<dbReference type="GO" id="GO:0005829">
    <property type="term" value="C:cytosol"/>
    <property type="evidence" value="ECO:0007669"/>
    <property type="project" value="TreeGrafter"/>
</dbReference>
<dbReference type="GO" id="GO:0050660">
    <property type="term" value="F:flavin adenine dinucleotide binding"/>
    <property type="evidence" value="ECO:0007669"/>
    <property type="project" value="UniProtKB-UniRule"/>
</dbReference>
<dbReference type="GO" id="GO:0047151">
    <property type="term" value="F:tRNA (uracil(54)-C5)-methyltransferase activity, 5,10-methylenetetrahydrofolate-dependent"/>
    <property type="evidence" value="ECO:0007669"/>
    <property type="project" value="UniProtKB-UniRule"/>
</dbReference>
<dbReference type="GO" id="GO:0030488">
    <property type="term" value="P:tRNA methylation"/>
    <property type="evidence" value="ECO:0007669"/>
    <property type="project" value="TreeGrafter"/>
</dbReference>
<dbReference type="GO" id="GO:0002098">
    <property type="term" value="P:tRNA wobble uridine modification"/>
    <property type="evidence" value="ECO:0007669"/>
    <property type="project" value="TreeGrafter"/>
</dbReference>
<dbReference type="FunFam" id="3.50.50.60:FF:000035">
    <property type="entry name" value="Methylenetetrahydrofolate--tRNA-(uracil-5-)-methyltransferase TrmFO"/>
    <property type="match status" value="1"/>
</dbReference>
<dbReference type="FunFam" id="3.50.50.60:FF:000040">
    <property type="entry name" value="Methylenetetrahydrofolate--tRNA-(uracil-5-)-methyltransferase TrmFO"/>
    <property type="match status" value="1"/>
</dbReference>
<dbReference type="Gene3D" id="3.50.50.60">
    <property type="entry name" value="FAD/NAD(P)-binding domain"/>
    <property type="match status" value="2"/>
</dbReference>
<dbReference type="HAMAP" id="MF_01037">
    <property type="entry name" value="TrmFO"/>
    <property type="match status" value="1"/>
</dbReference>
<dbReference type="InterPro" id="IPR036188">
    <property type="entry name" value="FAD/NAD-bd_sf"/>
</dbReference>
<dbReference type="InterPro" id="IPR002218">
    <property type="entry name" value="MnmG-rel"/>
</dbReference>
<dbReference type="InterPro" id="IPR020595">
    <property type="entry name" value="MnmG-rel_CS"/>
</dbReference>
<dbReference type="InterPro" id="IPR040131">
    <property type="entry name" value="MnmG_N"/>
</dbReference>
<dbReference type="InterPro" id="IPR004417">
    <property type="entry name" value="TrmFO"/>
</dbReference>
<dbReference type="NCBIfam" id="TIGR00137">
    <property type="entry name" value="gid_trmFO"/>
    <property type="match status" value="1"/>
</dbReference>
<dbReference type="NCBIfam" id="NF003739">
    <property type="entry name" value="PRK05335.1"/>
    <property type="match status" value="1"/>
</dbReference>
<dbReference type="PANTHER" id="PTHR11806">
    <property type="entry name" value="GLUCOSE INHIBITED DIVISION PROTEIN A"/>
    <property type="match status" value="1"/>
</dbReference>
<dbReference type="PANTHER" id="PTHR11806:SF2">
    <property type="entry name" value="METHYLENETETRAHYDROFOLATE--TRNA-(URACIL-5-)-METHYLTRANSFERASE TRMFO"/>
    <property type="match status" value="1"/>
</dbReference>
<dbReference type="Pfam" id="PF01134">
    <property type="entry name" value="GIDA"/>
    <property type="match status" value="1"/>
</dbReference>
<dbReference type="SUPFAM" id="SSF51905">
    <property type="entry name" value="FAD/NAD(P)-binding domain"/>
    <property type="match status" value="1"/>
</dbReference>
<dbReference type="PROSITE" id="PS01281">
    <property type="entry name" value="GIDA_2"/>
    <property type="match status" value="1"/>
</dbReference>
<sequence>MTEQVVNVIGAGLAGSEAAWQIAKRGVKVRLYEMRPVKQTPAHHTDKFAELVCSNSLRANGLTNAVGVIKEEMRILDSVILKAADQCSVPAGGALAVDRHEFAGYVTEAVKNHPLVEVIHEEVTEIPEGITVIATGPLTSKALAEKIQGLTGLDYLYFYDAAAPIIEKDSIDMDKVYLKSRYDKGEAAYLNCPMTKEEFDRFRQALIEAEVVPLKEFEKEIYFEGCMPIEVMASRGEKTMLFGPMKPVGLEDPKTGKRPYAVVQLRQDDAAGTLYNIVGFQTHLKWGPQKEVLQLIPGLENVEIVRYGVMHRNTFINSPKVLEKTYQLREQKNIFFAGQMTGVEGYVESAGSGLIAGINAARLALGQEPIIFPFETALGSMARYITEAQSKNFQPMNVNFGIFPELPPGRRSKPERAEMHATRAISTIHNFVNSQTI</sequence>
<name>TRMFO_LYSSC</name>
<accession>B1HQJ3</accession>
<reference key="1">
    <citation type="journal article" date="2008" name="J. Bacteriol.">
        <title>Complete genome sequence of the mosquitocidal bacterium Bacillus sphaericus C3-41 and comparison with those of closely related Bacillus species.</title>
        <authorList>
            <person name="Hu X."/>
            <person name="Fan W."/>
            <person name="Han B."/>
            <person name="Liu H."/>
            <person name="Zheng D."/>
            <person name="Li Q."/>
            <person name="Dong W."/>
            <person name="Yan J."/>
            <person name="Gao M."/>
            <person name="Berry C."/>
            <person name="Yuan Z."/>
        </authorList>
    </citation>
    <scope>NUCLEOTIDE SEQUENCE [LARGE SCALE GENOMIC DNA]</scope>
    <source>
        <strain>C3-41</strain>
    </source>
</reference>
<proteinExistence type="inferred from homology"/>
<evidence type="ECO:0000255" key="1">
    <source>
        <dbReference type="HAMAP-Rule" id="MF_01037"/>
    </source>
</evidence>